<name>IF2_STRA3</name>
<dbReference type="EMBL" id="AJ251495">
    <property type="protein sequence ID" value="CAC00489.1"/>
    <property type="molecule type" value="Genomic_DNA"/>
</dbReference>
<dbReference type="EMBL" id="AL766845">
    <property type="protein sequence ID" value="CAD46061.1"/>
    <property type="molecule type" value="Genomic_DNA"/>
</dbReference>
<dbReference type="RefSeq" id="WP_000039152.1">
    <property type="nucleotide sequence ID" value="NC_004368.1"/>
</dbReference>
<dbReference type="SMR" id="P0A3K6"/>
<dbReference type="KEGG" id="san:infB"/>
<dbReference type="eggNOG" id="COG0532">
    <property type="taxonomic scope" value="Bacteria"/>
</dbReference>
<dbReference type="HOGENOM" id="CLU_006301_5_0_9"/>
<dbReference type="Proteomes" id="UP000000823">
    <property type="component" value="Chromosome"/>
</dbReference>
<dbReference type="GO" id="GO:0005829">
    <property type="term" value="C:cytosol"/>
    <property type="evidence" value="ECO:0007669"/>
    <property type="project" value="TreeGrafter"/>
</dbReference>
<dbReference type="GO" id="GO:0005525">
    <property type="term" value="F:GTP binding"/>
    <property type="evidence" value="ECO:0007669"/>
    <property type="project" value="UniProtKB-KW"/>
</dbReference>
<dbReference type="GO" id="GO:0003924">
    <property type="term" value="F:GTPase activity"/>
    <property type="evidence" value="ECO:0007669"/>
    <property type="project" value="UniProtKB-UniRule"/>
</dbReference>
<dbReference type="GO" id="GO:0003743">
    <property type="term" value="F:translation initiation factor activity"/>
    <property type="evidence" value="ECO:0007669"/>
    <property type="project" value="UniProtKB-UniRule"/>
</dbReference>
<dbReference type="CDD" id="cd01887">
    <property type="entry name" value="IF2_eIF5B"/>
    <property type="match status" value="1"/>
</dbReference>
<dbReference type="CDD" id="cd03702">
    <property type="entry name" value="IF2_mtIF2_II"/>
    <property type="match status" value="1"/>
</dbReference>
<dbReference type="CDD" id="cd03692">
    <property type="entry name" value="mtIF2_IVc"/>
    <property type="match status" value="1"/>
</dbReference>
<dbReference type="FunFam" id="2.40.30.10:FF:000007">
    <property type="entry name" value="Translation initiation factor IF-2"/>
    <property type="match status" value="1"/>
</dbReference>
<dbReference type="FunFam" id="2.40.30.10:FF:000008">
    <property type="entry name" value="Translation initiation factor IF-2"/>
    <property type="match status" value="1"/>
</dbReference>
<dbReference type="FunFam" id="3.40.50.10050:FF:000001">
    <property type="entry name" value="Translation initiation factor IF-2"/>
    <property type="match status" value="1"/>
</dbReference>
<dbReference type="FunFam" id="3.40.50.300:FF:000019">
    <property type="entry name" value="Translation initiation factor IF-2"/>
    <property type="match status" value="1"/>
</dbReference>
<dbReference type="Gene3D" id="1.10.10.2480">
    <property type="match status" value="1"/>
</dbReference>
<dbReference type="Gene3D" id="3.40.50.300">
    <property type="entry name" value="P-loop containing nucleotide triphosphate hydrolases"/>
    <property type="match status" value="1"/>
</dbReference>
<dbReference type="Gene3D" id="2.40.30.10">
    <property type="entry name" value="Translation factors"/>
    <property type="match status" value="2"/>
</dbReference>
<dbReference type="Gene3D" id="3.40.50.10050">
    <property type="entry name" value="Translation initiation factor IF- 2, domain 3"/>
    <property type="match status" value="1"/>
</dbReference>
<dbReference type="HAMAP" id="MF_00100_B">
    <property type="entry name" value="IF_2_B"/>
    <property type="match status" value="1"/>
</dbReference>
<dbReference type="InterPro" id="IPR053905">
    <property type="entry name" value="EF-G-like_DII"/>
</dbReference>
<dbReference type="InterPro" id="IPR044145">
    <property type="entry name" value="IF2_II"/>
</dbReference>
<dbReference type="InterPro" id="IPR006847">
    <property type="entry name" value="IF2_N"/>
</dbReference>
<dbReference type="InterPro" id="IPR027417">
    <property type="entry name" value="P-loop_NTPase"/>
</dbReference>
<dbReference type="InterPro" id="IPR005225">
    <property type="entry name" value="Small_GTP-bd"/>
</dbReference>
<dbReference type="InterPro" id="IPR000795">
    <property type="entry name" value="T_Tr_GTP-bd_dom"/>
</dbReference>
<dbReference type="InterPro" id="IPR000178">
    <property type="entry name" value="TF_IF2_bacterial-like"/>
</dbReference>
<dbReference type="InterPro" id="IPR015760">
    <property type="entry name" value="TIF_IF2"/>
</dbReference>
<dbReference type="InterPro" id="IPR023115">
    <property type="entry name" value="TIF_IF2_dom3"/>
</dbReference>
<dbReference type="InterPro" id="IPR036925">
    <property type="entry name" value="TIF_IF2_dom3_sf"/>
</dbReference>
<dbReference type="InterPro" id="IPR009000">
    <property type="entry name" value="Transl_B-barrel_sf"/>
</dbReference>
<dbReference type="NCBIfam" id="TIGR00487">
    <property type="entry name" value="IF-2"/>
    <property type="match status" value="1"/>
</dbReference>
<dbReference type="NCBIfam" id="TIGR00231">
    <property type="entry name" value="small_GTP"/>
    <property type="match status" value="1"/>
</dbReference>
<dbReference type="PANTHER" id="PTHR43381:SF5">
    <property type="entry name" value="TR-TYPE G DOMAIN-CONTAINING PROTEIN"/>
    <property type="match status" value="1"/>
</dbReference>
<dbReference type="PANTHER" id="PTHR43381">
    <property type="entry name" value="TRANSLATION INITIATION FACTOR IF-2-RELATED"/>
    <property type="match status" value="1"/>
</dbReference>
<dbReference type="Pfam" id="PF22042">
    <property type="entry name" value="EF-G_D2"/>
    <property type="match status" value="1"/>
</dbReference>
<dbReference type="Pfam" id="PF00009">
    <property type="entry name" value="GTP_EFTU"/>
    <property type="match status" value="1"/>
</dbReference>
<dbReference type="Pfam" id="PF11987">
    <property type="entry name" value="IF-2"/>
    <property type="match status" value="1"/>
</dbReference>
<dbReference type="Pfam" id="PF04760">
    <property type="entry name" value="IF2_N"/>
    <property type="match status" value="2"/>
</dbReference>
<dbReference type="SUPFAM" id="SSF52156">
    <property type="entry name" value="Initiation factor IF2/eIF5b, domain 3"/>
    <property type="match status" value="1"/>
</dbReference>
<dbReference type="SUPFAM" id="SSF52540">
    <property type="entry name" value="P-loop containing nucleoside triphosphate hydrolases"/>
    <property type="match status" value="1"/>
</dbReference>
<dbReference type="SUPFAM" id="SSF50447">
    <property type="entry name" value="Translation proteins"/>
    <property type="match status" value="2"/>
</dbReference>
<dbReference type="PROSITE" id="PS51722">
    <property type="entry name" value="G_TR_2"/>
    <property type="match status" value="1"/>
</dbReference>
<dbReference type="PROSITE" id="PS01176">
    <property type="entry name" value="IF2"/>
    <property type="match status" value="1"/>
</dbReference>
<keyword id="KW-0963">Cytoplasm</keyword>
<keyword id="KW-0342">GTP-binding</keyword>
<keyword id="KW-0396">Initiation factor</keyword>
<keyword id="KW-0547">Nucleotide-binding</keyword>
<keyword id="KW-0648">Protein biosynthesis</keyword>
<evidence type="ECO:0000250" key="1"/>
<evidence type="ECO:0000256" key="2">
    <source>
        <dbReference type="SAM" id="MobiDB-lite"/>
    </source>
</evidence>
<evidence type="ECO:0000305" key="3"/>
<reference key="1">
    <citation type="journal article" date="2000" name="Microbiology">
        <title>Investigation of the translation-initiation factor IF2 gene, infB, as a tool to study the population structure of Streptococcus agalactiae.</title>
        <authorList>
            <person name="Hedegaard J."/>
            <person name="Hauge M."/>
            <person name="Fage-Larsen J."/>
            <person name="Mortensen K.K."/>
            <person name="Kilian M."/>
            <person name="Sperling-Petersen H.U."/>
            <person name="Poulsen K."/>
        </authorList>
    </citation>
    <scope>NUCLEOTIDE SEQUENCE [GENOMIC DNA]</scope>
    <source>
        <strain>3164 / Serotype III</strain>
    </source>
</reference>
<reference key="2">
    <citation type="journal article" date="2002" name="Mol. Microbiol.">
        <title>Genome sequence of Streptococcus agalactiae, a pathogen causing invasive neonatal disease.</title>
        <authorList>
            <person name="Glaser P."/>
            <person name="Rusniok C."/>
            <person name="Buchrieser C."/>
            <person name="Chevalier F."/>
            <person name="Frangeul L."/>
            <person name="Msadek T."/>
            <person name="Zouine M."/>
            <person name="Couve E."/>
            <person name="Lalioui L."/>
            <person name="Poyart C."/>
            <person name="Trieu-Cuot P."/>
            <person name="Kunst F."/>
        </authorList>
    </citation>
    <scope>NUCLEOTIDE SEQUENCE [LARGE SCALE GENOMIC DNA]</scope>
    <source>
        <strain>NEM316</strain>
    </source>
</reference>
<sequence>MSKKRLHEIAKEIGKTSKEVVEQAQSLGLPVKSHASSVEENDATRIVESFSSSKTKAPTNSVQTNQGVKTESKTVETKQGLSDDKPSTQPVAKPKPQSRNFKAEREARAKAEAEKRQHNGDHRKNNRHNDTRSDDRRHQGQKRSNGNRNDNRQGQQNNRNKNDGRYADHKQKPQTRPQQPAGNRIDFKARAAALKAEQNAEYSRHSEQRFREEQEAKRQAAKEQELAKAAALKAQEEAQKAKEKLASKPVAKVKEIVNKVAATPSQTADSRRKKQTRSDKSRQFSNENEDGQKQTKNKKNWNNQNQVRNQRNSNWNHNKKNKKGKTNGAPKPVTERKFHELPKEFEYTEGMTVAEIAKRIKREPAEIVKKLFMMGVMATQNQSLDGDTIELLMVDYGIEAHAKVEVDEADIERFFADEDYLNPDNLTERPPVVTIMGHVDHGKTTLLDTLRNSRVATGEAGGITQHIGAYQIEEAGKKITFLDTPGHAAFTSMRARGASVTDITILIVAADDGVMPQTVEAINHSKAAGVPIIVAINKIDKPGANPERVISELAEHGVISTAWGGESEFVEISAKFGKNIQELLETVLLVAEMEELKADADVRAIGTVIEARLDKGKGAVATLLVQQGTLNVQDPIVVGNTFGRVRAMTNDLGRRVKVAGPSTPVSITGLNEAPMAGDHFAVYADEKAARAAGEERAKRALLKQRQNTQRVSLENLFDTLKAGEVKSVNVIIKADVQGSVEALAASLLKIDVEGVKVNVVHSAVGAINESDVTLAEASNAVIIGFNVRPTPQARQQADADDVEIRQHSIIYKVIEEVEEAMKGKLDPEYQEKILGEAIIRETFKVSKVGTIGGFMVINGKVTRDSSVRVIRDGVVIFDGKLASLKHYKDDVKEVGNAQEGGLMIENYNDLKEDDTIEAYIMEEIKRK</sequence>
<gene>
    <name type="primary">infB</name>
    <name type="ordered locus">gbs0417</name>
</gene>
<comment type="function">
    <text evidence="1">One of the essential components for the initiation of protein synthesis. Protects formylmethionyl-tRNA from spontaneous hydrolysis and promotes its binding to the 30S ribosomal subunits. Also involved in the hydrolysis of GTP during the formation of the 70S ribosomal complex (By similarity).</text>
</comment>
<comment type="subcellular location">
    <subcellularLocation>
        <location evidence="1">Cytoplasm</location>
    </subcellularLocation>
</comment>
<comment type="similarity">
    <text evidence="3">Belongs to the TRAFAC class translation factor GTPase superfamily. Classic translation factor GTPase family. IF-2 subfamily.</text>
</comment>
<accession>P0A3K6</accession>
<accession>Q9ZF20</accession>
<proteinExistence type="inferred from homology"/>
<feature type="chain" id="PRO_0000137258" description="Translation initiation factor IF-2">
    <location>
        <begin position="1"/>
        <end position="927"/>
    </location>
</feature>
<feature type="domain" description="tr-type G">
    <location>
        <begin position="428"/>
        <end position="597"/>
    </location>
</feature>
<feature type="region of interest" description="Disordered" evidence="2">
    <location>
        <begin position="27"/>
        <end position="338"/>
    </location>
</feature>
<feature type="region of interest" description="G1" evidence="1">
    <location>
        <begin position="437"/>
        <end position="444"/>
    </location>
</feature>
<feature type="region of interest" description="G2" evidence="1">
    <location>
        <begin position="462"/>
        <end position="466"/>
    </location>
</feature>
<feature type="region of interest" description="G3" evidence="1">
    <location>
        <begin position="483"/>
        <end position="486"/>
    </location>
</feature>
<feature type="region of interest" description="G4" evidence="1">
    <location>
        <begin position="537"/>
        <end position="540"/>
    </location>
</feature>
<feature type="region of interest" description="G5" evidence="1">
    <location>
        <begin position="573"/>
        <end position="575"/>
    </location>
</feature>
<feature type="compositionally biased region" description="Polar residues" evidence="2">
    <location>
        <begin position="49"/>
        <end position="69"/>
    </location>
</feature>
<feature type="compositionally biased region" description="Basic and acidic residues" evidence="2">
    <location>
        <begin position="70"/>
        <end position="86"/>
    </location>
</feature>
<feature type="compositionally biased region" description="Basic and acidic residues" evidence="2">
    <location>
        <begin position="101"/>
        <end position="138"/>
    </location>
</feature>
<feature type="compositionally biased region" description="Low complexity" evidence="2">
    <location>
        <begin position="146"/>
        <end position="159"/>
    </location>
</feature>
<feature type="compositionally biased region" description="Basic and acidic residues" evidence="2">
    <location>
        <begin position="160"/>
        <end position="171"/>
    </location>
</feature>
<feature type="compositionally biased region" description="Basic and acidic residues" evidence="2">
    <location>
        <begin position="202"/>
        <end position="226"/>
    </location>
</feature>
<feature type="compositionally biased region" description="Basic and acidic residues" evidence="2">
    <location>
        <begin position="234"/>
        <end position="257"/>
    </location>
</feature>
<feature type="compositionally biased region" description="Low complexity" evidence="2">
    <location>
        <begin position="300"/>
        <end position="316"/>
    </location>
</feature>
<feature type="binding site" evidence="1">
    <location>
        <begin position="437"/>
        <end position="444"/>
    </location>
    <ligand>
        <name>GTP</name>
        <dbReference type="ChEBI" id="CHEBI:37565"/>
    </ligand>
</feature>
<feature type="binding site" evidence="1">
    <location>
        <begin position="483"/>
        <end position="487"/>
    </location>
    <ligand>
        <name>GTP</name>
        <dbReference type="ChEBI" id="CHEBI:37565"/>
    </ligand>
</feature>
<feature type="binding site" evidence="1">
    <location>
        <begin position="537"/>
        <end position="540"/>
    </location>
    <ligand>
        <name>GTP</name>
        <dbReference type="ChEBI" id="CHEBI:37565"/>
    </ligand>
</feature>
<protein>
    <recommendedName>
        <fullName>Translation initiation factor IF-2</fullName>
    </recommendedName>
</protein>
<organism>
    <name type="scientific">Streptococcus agalactiae serotype III (strain NEM316)</name>
    <dbReference type="NCBI Taxonomy" id="211110"/>
    <lineage>
        <taxon>Bacteria</taxon>
        <taxon>Bacillati</taxon>
        <taxon>Bacillota</taxon>
        <taxon>Bacilli</taxon>
        <taxon>Lactobacillales</taxon>
        <taxon>Streptococcaceae</taxon>
        <taxon>Streptococcus</taxon>
    </lineage>
</organism>